<name>NELFE_MOUSE</name>
<protein>
    <recommendedName>
        <fullName>Negative elongation factor E</fullName>
        <shortName>NELF-E</shortName>
    </recommendedName>
    <alternativeName>
        <fullName>RNA-binding protein RD</fullName>
    </alternativeName>
</protein>
<evidence type="ECO:0000250" key="1">
    <source>
        <dbReference type="UniProtKB" id="P18615"/>
    </source>
</evidence>
<evidence type="ECO:0000255" key="2"/>
<evidence type="ECO:0000255" key="3">
    <source>
        <dbReference type="PROSITE-ProRule" id="PRU00176"/>
    </source>
</evidence>
<evidence type="ECO:0000256" key="4">
    <source>
        <dbReference type="SAM" id="MobiDB-lite"/>
    </source>
</evidence>
<evidence type="ECO:0000269" key="5">
    <source>
    </source>
</evidence>
<evidence type="ECO:0000269" key="6">
    <source>
    </source>
</evidence>
<evidence type="ECO:0000269" key="7">
    <source>
    </source>
</evidence>
<evidence type="ECO:0000303" key="8">
    <source>
    </source>
</evidence>
<evidence type="ECO:0000303" key="9">
    <source>
    </source>
</evidence>
<evidence type="ECO:0000305" key="10"/>
<evidence type="ECO:0007744" key="11">
    <source>
    </source>
</evidence>
<evidence type="ECO:0007744" key="12">
    <source>
    </source>
</evidence>
<proteinExistence type="evidence at protein level"/>
<keyword id="KW-0013">ADP-ribosylation</keyword>
<keyword id="KW-0025">Alternative splicing</keyword>
<keyword id="KW-0158">Chromosome</keyword>
<keyword id="KW-0175">Coiled coil</keyword>
<keyword id="KW-1017">Isopeptide bond</keyword>
<keyword id="KW-0539">Nucleus</keyword>
<keyword id="KW-0597">Phosphoprotein</keyword>
<keyword id="KW-1185">Reference proteome</keyword>
<keyword id="KW-0677">Repeat</keyword>
<keyword id="KW-0678">Repressor</keyword>
<keyword id="KW-0694">RNA-binding</keyword>
<keyword id="KW-0804">Transcription</keyword>
<keyword id="KW-0805">Transcription regulation</keyword>
<keyword id="KW-0832">Ubl conjugation</keyword>
<reference key="1">
    <citation type="journal article" date="1988" name="Science">
        <title>A previously undetected MHC gene with an unusual periodic structure.</title>
        <authorList>
            <person name="Levi-Strauss M."/>
            <person name="Carroll M.C."/>
            <person name="Steinmetz M."/>
            <person name="Meo T."/>
        </authorList>
    </citation>
    <scope>NUCLEOTIDE SEQUENCE [GENOMIC DNA] (ISOFORM 1)</scope>
    <source>
        <tissue>Liver</tissue>
    </source>
</reference>
<reference key="2">
    <citation type="journal article" date="2005" name="Science">
        <title>The transcriptional landscape of the mammalian genome.</title>
        <authorList>
            <person name="Carninci P."/>
            <person name="Kasukawa T."/>
            <person name="Katayama S."/>
            <person name="Gough J."/>
            <person name="Frith M.C."/>
            <person name="Maeda N."/>
            <person name="Oyama R."/>
            <person name="Ravasi T."/>
            <person name="Lenhard B."/>
            <person name="Wells C."/>
            <person name="Kodzius R."/>
            <person name="Shimokawa K."/>
            <person name="Bajic V.B."/>
            <person name="Brenner S.E."/>
            <person name="Batalov S."/>
            <person name="Forrest A.R."/>
            <person name="Zavolan M."/>
            <person name="Davis M.J."/>
            <person name="Wilming L.G."/>
            <person name="Aidinis V."/>
            <person name="Allen J.E."/>
            <person name="Ambesi-Impiombato A."/>
            <person name="Apweiler R."/>
            <person name="Aturaliya R.N."/>
            <person name="Bailey T.L."/>
            <person name="Bansal M."/>
            <person name="Baxter L."/>
            <person name="Beisel K.W."/>
            <person name="Bersano T."/>
            <person name="Bono H."/>
            <person name="Chalk A.M."/>
            <person name="Chiu K.P."/>
            <person name="Choudhary V."/>
            <person name="Christoffels A."/>
            <person name="Clutterbuck D.R."/>
            <person name="Crowe M.L."/>
            <person name="Dalla E."/>
            <person name="Dalrymple B.P."/>
            <person name="de Bono B."/>
            <person name="Della Gatta G."/>
            <person name="di Bernardo D."/>
            <person name="Down T."/>
            <person name="Engstrom P."/>
            <person name="Fagiolini M."/>
            <person name="Faulkner G."/>
            <person name="Fletcher C.F."/>
            <person name="Fukushima T."/>
            <person name="Furuno M."/>
            <person name="Futaki S."/>
            <person name="Gariboldi M."/>
            <person name="Georgii-Hemming P."/>
            <person name="Gingeras T.R."/>
            <person name="Gojobori T."/>
            <person name="Green R.E."/>
            <person name="Gustincich S."/>
            <person name="Harbers M."/>
            <person name="Hayashi Y."/>
            <person name="Hensch T.K."/>
            <person name="Hirokawa N."/>
            <person name="Hill D."/>
            <person name="Huminiecki L."/>
            <person name="Iacono M."/>
            <person name="Ikeo K."/>
            <person name="Iwama A."/>
            <person name="Ishikawa T."/>
            <person name="Jakt M."/>
            <person name="Kanapin A."/>
            <person name="Katoh M."/>
            <person name="Kawasawa Y."/>
            <person name="Kelso J."/>
            <person name="Kitamura H."/>
            <person name="Kitano H."/>
            <person name="Kollias G."/>
            <person name="Krishnan S.P."/>
            <person name="Kruger A."/>
            <person name="Kummerfeld S.K."/>
            <person name="Kurochkin I.V."/>
            <person name="Lareau L.F."/>
            <person name="Lazarevic D."/>
            <person name="Lipovich L."/>
            <person name="Liu J."/>
            <person name="Liuni S."/>
            <person name="McWilliam S."/>
            <person name="Madan Babu M."/>
            <person name="Madera M."/>
            <person name="Marchionni L."/>
            <person name="Matsuda H."/>
            <person name="Matsuzawa S."/>
            <person name="Miki H."/>
            <person name="Mignone F."/>
            <person name="Miyake S."/>
            <person name="Morris K."/>
            <person name="Mottagui-Tabar S."/>
            <person name="Mulder N."/>
            <person name="Nakano N."/>
            <person name="Nakauchi H."/>
            <person name="Ng P."/>
            <person name="Nilsson R."/>
            <person name="Nishiguchi S."/>
            <person name="Nishikawa S."/>
            <person name="Nori F."/>
            <person name="Ohara O."/>
            <person name="Okazaki Y."/>
            <person name="Orlando V."/>
            <person name="Pang K.C."/>
            <person name="Pavan W.J."/>
            <person name="Pavesi G."/>
            <person name="Pesole G."/>
            <person name="Petrovsky N."/>
            <person name="Piazza S."/>
            <person name="Reed J."/>
            <person name="Reid J.F."/>
            <person name="Ring B.Z."/>
            <person name="Ringwald M."/>
            <person name="Rost B."/>
            <person name="Ruan Y."/>
            <person name="Salzberg S.L."/>
            <person name="Sandelin A."/>
            <person name="Schneider C."/>
            <person name="Schoenbach C."/>
            <person name="Sekiguchi K."/>
            <person name="Semple C.A."/>
            <person name="Seno S."/>
            <person name="Sessa L."/>
            <person name="Sheng Y."/>
            <person name="Shibata Y."/>
            <person name="Shimada H."/>
            <person name="Shimada K."/>
            <person name="Silva D."/>
            <person name="Sinclair B."/>
            <person name="Sperling S."/>
            <person name="Stupka E."/>
            <person name="Sugiura K."/>
            <person name="Sultana R."/>
            <person name="Takenaka Y."/>
            <person name="Taki K."/>
            <person name="Tammoja K."/>
            <person name="Tan S.L."/>
            <person name="Tang S."/>
            <person name="Taylor M.S."/>
            <person name="Tegner J."/>
            <person name="Teichmann S.A."/>
            <person name="Ueda H.R."/>
            <person name="van Nimwegen E."/>
            <person name="Verardo R."/>
            <person name="Wei C.L."/>
            <person name="Yagi K."/>
            <person name="Yamanishi H."/>
            <person name="Zabarovsky E."/>
            <person name="Zhu S."/>
            <person name="Zimmer A."/>
            <person name="Hide W."/>
            <person name="Bult C."/>
            <person name="Grimmond S.M."/>
            <person name="Teasdale R.D."/>
            <person name="Liu E.T."/>
            <person name="Brusic V."/>
            <person name="Quackenbush J."/>
            <person name="Wahlestedt C."/>
            <person name="Mattick J.S."/>
            <person name="Hume D.A."/>
            <person name="Kai C."/>
            <person name="Sasaki D."/>
            <person name="Tomaru Y."/>
            <person name="Fukuda S."/>
            <person name="Kanamori-Katayama M."/>
            <person name="Suzuki M."/>
            <person name="Aoki J."/>
            <person name="Arakawa T."/>
            <person name="Iida J."/>
            <person name="Imamura K."/>
            <person name="Itoh M."/>
            <person name="Kato T."/>
            <person name="Kawaji H."/>
            <person name="Kawagashira N."/>
            <person name="Kawashima T."/>
            <person name="Kojima M."/>
            <person name="Kondo S."/>
            <person name="Konno H."/>
            <person name="Nakano K."/>
            <person name="Ninomiya N."/>
            <person name="Nishio T."/>
            <person name="Okada M."/>
            <person name="Plessy C."/>
            <person name="Shibata K."/>
            <person name="Shiraki T."/>
            <person name="Suzuki S."/>
            <person name="Tagami M."/>
            <person name="Waki K."/>
            <person name="Watahiki A."/>
            <person name="Okamura-Oho Y."/>
            <person name="Suzuki H."/>
            <person name="Kawai J."/>
            <person name="Hayashizaki Y."/>
        </authorList>
    </citation>
    <scope>NUCLEOTIDE SEQUENCE [LARGE SCALE MRNA] (ISOFORM 2)</scope>
    <source>
        <strain>C57BL/6J</strain>
        <tissue>Embryo</tissue>
    </source>
</reference>
<reference key="3">
    <citation type="journal article" date="2004" name="Genome Res.">
        <title>The status, quality, and expansion of the NIH full-length cDNA project: the Mammalian Gene Collection (MGC).</title>
        <authorList>
            <consortium name="The MGC Project Team"/>
        </authorList>
    </citation>
    <scope>NUCLEOTIDE SEQUENCE [LARGE SCALE MRNA] (ISOFORM 2)</scope>
    <source>
        <tissue>Mammary gland</tissue>
    </source>
</reference>
<reference key="4">
    <citation type="journal article" date="2003" name="Genome Res.">
        <title>Analysis of the gene-dense major histocompatibility complex class III region and its comparison to mouse.</title>
        <authorList>
            <person name="Xie T."/>
            <person name="Rowen L."/>
            <person name="Aguado B."/>
            <person name="Ahearn M.E."/>
            <person name="Madan A."/>
            <person name="Qin S."/>
            <person name="Campbell R.D."/>
            <person name="Hood L."/>
        </authorList>
    </citation>
    <scope>NUCLEOTIDE SEQUENCE [LARGE SCALE GENOMIC DNA] OF 26-375</scope>
    <source>
        <strain>129</strain>
    </source>
</reference>
<reference key="5">
    <citation type="journal article" date="1997" name="Mamm. Genome">
        <title>Murine D17H6S45 (Rd) gene: polymorphism and overlap with complement factor B.</title>
        <authorList>
            <person name="Taylor P.R."/>
            <person name="Slingsby J.H."/>
            <person name="Walport M.J."/>
            <person name="Botto M."/>
        </authorList>
    </citation>
    <scope>NUCLEOTIDE SEQUENCE [GENOMIC DNA] OF 196-247</scope>
    <scope>POLYMORPHISM</scope>
    <scope>VARIANTS 228-ARG-ASP-229 DEL AND 229-ASP--ARG-236 DEL</scope>
    <source>
        <strain>129/Sv</strain>
        <strain>LP.RIII/Sn</strain>
    </source>
</reference>
<reference key="6">
    <citation type="journal article" date="2004" name="Mol. Cell. Proteomics">
        <title>Phosphoproteomic analysis of the developing mouse brain.</title>
        <authorList>
            <person name="Ballif B.A."/>
            <person name="Villen J."/>
            <person name="Beausoleil S.A."/>
            <person name="Schwartz D."/>
            <person name="Gygi S.P."/>
        </authorList>
    </citation>
    <scope>IDENTIFICATION BY MASS SPECTROMETRY [LARGE SCALE ANALYSIS]</scope>
    <source>
        <tissue>Embryonic brain</tissue>
    </source>
</reference>
<reference key="7">
    <citation type="journal article" date="2007" name="Proc. Natl. Acad. Sci. U.S.A.">
        <title>Large-scale phosphorylation analysis of mouse liver.</title>
        <authorList>
            <person name="Villen J."/>
            <person name="Beausoleil S.A."/>
            <person name="Gerber S.A."/>
            <person name="Gygi S.P."/>
        </authorList>
    </citation>
    <scope>PHOSPHORYLATION [LARGE SCALE ANALYSIS] AT SER-115</scope>
    <scope>IDENTIFICATION BY MASS SPECTROMETRY [LARGE SCALE ANALYSIS]</scope>
    <source>
        <tissue>Liver</tissue>
    </source>
</reference>
<reference key="8">
    <citation type="journal article" date="2009" name="Immunity">
        <title>The phagosomal proteome in interferon-gamma-activated macrophages.</title>
        <authorList>
            <person name="Trost M."/>
            <person name="English L."/>
            <person name="Lemieux S."/>
            <person name="Courcelles M."/>
            <person name="Desjardins M."/>
            <person name="Thibault P."/>
        </authorList>
    </citation>
    <scope>IDENTIFICATION BY MASS SPECTROMETRY [LARGE SCALE ANALYSIS]</scope>
</reference>
<reference key="9">
    <citation type="journal article" date="2009" name="Mol. Cell. Proteomics">
        <title>Large scale localization of protein phosphorylation by use of electron capture dissociation mass spectrometry.</title>
        <authorList>
            <person name="Sweet S.M."/>
            <person name="Bailey C.M."/>
            <person name="Cunningham D.L."/>
            <person name="Heath J.K."/>
            <person name="Cooper H.J."/>
        </authorList>
    </citation>
    <scope>IDENTIFICATION BY MASS SPECTROMETRY [LARGE SCALE ANALYSIS]</scope>
    <source>
        <tissue>Embryonic fibroblast</tissue>
    </source>
</reference>
<reference key="10">
    <citation type="journal article" date="2010" name="Cell">
        <title>A tissue-specific atlas of mouse protein phosphorylation and expression.</title>
        <authorList>
            <person name="Huttlin E.L."/>
            <person name="Jedrychowski M.P."/>
            <person name="Elias J.E."/>
            <person name="Goswami T."/>
            <person name="Rad R."/>
            <person name="Beausoleil S.A."/>
            <person name="Villen J."/>
            <person name="Haas W."/>
            <person name="Sowa M.E."/>
            <person name="Gygi S.P."/>
        </authorList>
    </citation>
    <scope>PHOSPHORYLATION [LARGE SCALE ANALYSIS] AT SER-115; SER-131 AND SER-357</scope>
    <scope>IDENTIFICATION BY MASS SPECTROMETRY [LARGE SCALE ANALYSIS]</scope>
    <source>
        <tissue>Brain</tissue>
        <tissue>Brown adipose tissue</tissue>
        <tissue>Heart</tissue>
        <tissue>Kidney</tissue>
        <tissue>Liver</tissue>
        <tissue>Lung</tissue>
        <tissue>Pancreas</tissue>
        <tissue>Spleen</tissue>
        <tissue>Testis</tissue>
    </source>
</reference>
<reference key="11">
    <citation type="journal article" date="2015" name="PLoS ONE">
        <title>Translational initiation at a non-AUG start codon for human and mouse negative elongation factor-B.</title>
        <authorList>
            <person name="Pan H."/>
            <person name="Zhao X."/>
            <person name="Zhang X."/>
            <person name="Abouelsoud M."/>
            <person name="Sun J."/>
            <person name="April C."/>
            <person name="Amleh A."/>
            <person name="Fan J.B."/>
            <person name="Hu Y."/>
            <person name="Li R."/>
        </authorList>
    </citation>
    <scope>INTERACTION WITH NELFB</scope>
</reference>
<reference key="12">
    <citation type="journal article" date="2019" name="Mol. Cell">
        <title>The histone deacetylase SIRT6 restrains transcription elongation via promoter-proximal pausing.</title>
        <authorList>
            <person name="Etchegaray J.P."/>
            <person name="Zhong L."/>
            <person name="Li C."/>
            <person name="Henriques T."/>
            <person name="Ablondi E."/>
            <person name="Nakadai T."/>
            <person name="Van Rechem C."/>
            <person name="Ferrer C."/>
            <person name="Ross K.N."/>
            <person name="Choi J.E."/>
            <person name="Samarakkody A."/>
            <person name="Ji F."/>
            <person name="Chang A."/>
            <person name="Sadreyev R.I."/>
            <person name="Ramaswamy S."/>
            <person name="Nechaev S."/>
            <person name="Whetstine J.R."/>
            <person name="Roeder R.G."/>
            <person name="Adelman K."/>
            <person name="Goren A."/>
            <person name="Mostoslavsky R."/>
        </authorList>
    </citation>
    <scope>FUNCTION</scope>
    <scope>SUBCELLULAR LOCATION</scope>
    <scope>PHOSPHORYLATION</scope>
</reference>
<sequence>MLVIPPGLSEEEEALQKKFNKLKKKKKALLALKKQSSSGPASQGGVKRSLSEQPVVDTATATEQAKQLVKSGAISAIKAETKNSGFKRSRTLEGKLKDPEKGPVPTFQPFQRSMSADEDLQEPSRRPQRKSLYESFVSSSDRLRELGQDGEEAEAPGAGDGPPRGFDWSYEEHGSARSSASPPRSRSRDRSHDRSRDRDRDKERDRDRDRDRDRDRDKDKDRDRDRDRDKERDRDRDRDRDRERDREGPFRRSDSFPERRAPRKGNTLYVYGEDMTPTLLRGAFSPFGNIIDLSMDPPRNCAFVTYEKMESADQAVAELNGTQVESVQLKVNIARKQPMLDAATGKSVWGSLAVQNSPKGCHRDKRTQIVYSDDL</sequence>
<dbReference type="EMBL" id="M21332">
    <property type="protein sequence ID" value="AAA39680.1"/>
    <property type="molecule type" value="Genomic_DNA"/>
</dbReference>
<dbReference type="EMBL" id="AK012389">
    <property type="protein sequence ID" value="BAB28206.1"/>
    <property type="molecule type" value="mRNA"/>
</dbReference>
<dbReference type="EMBL" id="BC034867">
    <property type="protein sequence ID" value="AAH34867.1"/>
    <property type="molecule type" value="mRNA"/>
</dbReference>
<dbReference type="EMBL" id="AF109906">
    <property type="protein sequence ID" value="AAC84161.1"/>
    <property type="molecule type" value="Genomic_DNA"/>
</dbReference>
<dbReference type="EMBL" id="U83841">
    <property type="protein sequence ID" value="AAB41535.1"/>
    <property type="molecule type" value="Genomic_DNA"/>
</dbReference>
<dbReference type="EMBL" id="U83842">
    <property type="protein sequence ID" value="AAB41536.1"/>
    <property type="molecule type" value="Genomic_DNA"/>
</dbReference>
<dbReference type="CCDS" id="CCDS28662.1">
    <molecule id="P19426-2"/>
</dbReference>
<dbReference type="PIR" id="A40112">
    <property type="entry name" value="A40112"/>
</dbReference>
<dbReference type="RefSeq" id="NP_001039328.1">
    <molecule id="P19426-2"/>
    <property type="nucleotide sequence ID" value="NM_001045863.1"/>
</dbReference>
<dbReference type="RefSeq" id="NP_001039329.1">
    <molecule id="P19426-2"/>
    <property type="nucleotide sequence ID" value="NM_001045864.1"/>
</dbReference>
<dbReference type="RefSeq" id="NP_613046.2">
    <molecule id="P19426-2"/>
    <property type="nucleotide sequence ID" value="NM_138580.2"/>
</dbReference>
<dbReference type="BMRB" id="P19426"/>
<dbReference type="SMR" id="P19426"/>
<dbReference type="BioGRID" id="205393">
    <property type="interactions" value="8"/>
</dbReference>
<dbReference type="FunCoup" id="P19426">
    <property type="interactions" value="3966"/>
</dbReference>
<dbReference type="IntAct" id="P19426">
    <property type="interactions" value="1"/>
</dbReference>
<dbReference type="STRING" id="10090.ENSMUSP00000094956"/>
<dbReference type="GlyGen" id="P19426">
    <property type="glycosylation" value="1 site, 1 O-linked glycan (1 site)"/>
</dbReference>
<dbReference type="iPTMnet" id="P19426"/>
<dbReference type="PhosphoSitePlus" id="P19426"/>
<dbReference type="SwissPalm" id="P19426"/>
<dbReference type="jPOST" id="P19426"/>
<dbReference type="PaxDb" id="10090-ENSMUSP00000134272"/>
<dbReference type="PeptideAtlas" id="P19426"/>
<dbReference type="ProteomicsDB" id="287370">
    <molecule id="P19426-1"/>
</dbReference>
<dbReference type="ProteomicsDB" id="287371">
    <molecule id="P19426-2"/>
</dbReference>
<dbReference type="Pumba" id="P19426"/>
<dbReference type="Antibodypedia" id="1924">
    <property type="antibodies" value="155 antibodies from 28 providers"/>
</dbReference>
<dbReference type="DNASU" id="27632"/>
<dbReference type="Ensembl" id="ENSMUST00000097343.11">
    <molecule id="P19426-2"/>
    <property type="protein sequence ID" value="ENSMUSP00000094956.5"/>
    <property type="gene ID" value="ENSMUSG00000024369.17"/>
</dbReference>
<dbReference type="Ensembl" id="ENSMUST00000165953.3">
    <molecule id="P19426-2"/>
    <property type="protein sequence ID" value="ENSMUSP00000131195.3"/>
    <property type="gene ID" value="ENSMUSG00000024369.17"/>
</dbReference>
<dbReference type="Ensembl" id="ENSMUST00000173357.8">
    <molecule id="P19426-2"/>
    <property type="protein sequence ID" value="ENSMUSP00000134272.2"/>
    <property type="gene ID" value="ENSMUSG00000024369.17"/>
</dbReference>
<dbReference type="GeneID" id="27632"/>
<dbReference type="KEGG" id="mmu:27632"/>
<dbReference type="AGR" id="MGI:102744"/>
<dbReference type="CTD" id="7936"/>
<dbReference type="MGI" id="MGI:102744">
    <property type="gene designation" value="Nelfe"/>
</dbReference>
<dbReference type="VEuPathDB" id="HostDB:ENSMUSG00000024369"/>
<dbReference type="eggNOG" id="ENOG502QQQ4">
    <property type="taxonomic scope" value="Eukaryota"/>
</dbReference>
<dbReference type="GeneTree" id="ENSGT00630000089917"/>
<dbReference type="HOGENOM" id="CLU_055643_0_0_1"/>
<dbReference type="InParanoid" id="P19426"/>
<dbReference type="OMA" id="SQKSAHK"/>
<dbReference type="OrthoDB" id="378874at2759"/>
<dbReference type="PhylomeDB" id="P19426"/>
<dbReference type="TreeFam" id="TF324087"/>
<dbReference type="Reactome" id="R-MMU-112382">
    <property type="pathway name" value="Formation of RNA Pol II elongation complex"/>
</dbReference>
<dbReference type="Reactome" id="R-MMU-113418">
    <property type="pathway name" value="Formation of the Early Elongation Complex"/>
</dbReference>
<dbReference type="Reactome" id="R-MMU-674695">
    <property type="pathway name" value="RNA Polymerase II Pre-transcription Events"/>
</dbReference>
<dbReference type="Reactome" id="R-MMU-6796648">
    <property type="pathway name" value="TP53 Regulates Transcription of DNA Repair Genes"/>
</dbReference>
<dbReference type="Reactome" id="R-MMU-75955">
    <property type="pathway name" value="RNA Polymerase II Transcription Elongation"/>
</dbReference>
<dbReference type="BioGRID-ORCS" id="27632">
    <property type="hits" value="16 hits in 80 CRISPR screens"/>
</dbReference>
<dbReference type="ChiTaRS" id="Nelfe">
    <property type="organism name" value="mouse"/>
</dbReference>
<dbReference type="PRO" id="PR:P19426"/>
<dbReference type="Proteomes" id="UP000000589">
    <property type="component" value="Chromosome 17"/>
</dbReference>
<dbReference type="RNAct" id="P19426">
    <property type="molecule type" value="protein"/>
</dbReference>
<dbReference type="Bgee" id="ENSMUSG00000024369">
    <property type="expression patterns" value="Expressed in seminiferous tubule of testis and 261 other cell types or tissues"/>
</dbReference>
<dbReference type="ExpressionAtlas" id="P19426">
    <property type="expression patterns" value="baseline and differential"/>
</dbReference>
<dbReference type="GO" id="GO:0000785">
    <property type="term" value="C:chromatin"/>
    <property type="evidence" value="ECO:0000314"/>
    <property type="project" value="UniProt"/>
</dbReference>
<dbReference type="GO" id="GO:0032021">
    <property type="term" value="C:NELF complex"/>
    <property type="evidence" value="ECO:0000250"/>
    <property type="project" value="UniProtKB"/>
</dbReference>
<dbReference type="GO" id="GO:0016604">
    <property type="term" value="C:nuclear body"/>
    <property type="evidence" value="ECO:0007669"/>
    <property type="project" value="Ensembl"/>
</dbReference>
<dbReference type="GO" id="GO:0005886">
    <property type="term" value="C:plasma membrane"/>
    <property type="evidence" value="ECO:0007669"/>
    <property type="project" value="Ensembl"/>
</dbReference>
<dbReference type="GO" id="GO:0003682">
    <property type="term" value="F:chromatin binding"/>
    <property type="evidence" value="ECO:0000314"/>
    <property type="project" value="UniProt"/>
</dbReference>
<dbReference type="GO" id="GO:0003729">
    <property type="term" value="F:mRNA binding"/>
    <property type="evidence" value="ECO:0007669"/>
    <property type="project" value="Ensembl"/>
</dbReference>
<dbReference type="GO" id="GO:0003723">
    <property type="term" value="F:RNA binding"/>
    <property type="evidence" value="ECO:0000250"/>
    <property type="project" value="UniProtKB"/>
</dbReference>
<dbReference type="GO" id="GO:0000122">
    <property type="term" value="P:negative regulation of transcription by RNA polymerase II"/>
    <property type="evidence" value="ECO:0007669"/>
    <property type="project" value="Ensembl"/>
</dbReference>
<dbReference type="GO" id="GO:0034244">
    <property type="term" value="P:negative regulation of transcription elongation by RNA polymerase II"/>
    <property type="evidence" value="ECO:0000314"/>
    <property type="project" value="UniProt"/>
</dbReference>
<dbReference type="GO" id="GO:0070374">
    <property type="term" value="P:positive regulation of ERK1 and ERK2 cascade"/>
    <property type="evidence" value="ECO:0007669"/>
    <property type="project" value="Ensembl"/>
</dbReference>
<dbReference type="GO" id="GO:0045944">
    <property type="term" value="P:positive regulation of transcription by RNA polymerase II"/>
    <property type="evidence" value="ECO:0007669"/>
    <property type="project" value="Ensembl"/>
</dbReference>
<dbReference type="CDD" id="cd12305">
    <property type="entry name" value="RRM_NELFE"/>
    <property type="match status" value="1"/>
</dbReference>
<dbReference type="FunFam" id="3.30.70.330:FF:000188">
    <property type="entry name" value="Negative elongation factor complex member E"/>
    <property type="match status" value="1"/>
</dbReference>
<dbReference type="Gene3D" id="3.30.70.330">
    <property type="match status" value="1"/>
</dbReference>
<dbReference type="InterPro" id="IPR033102">
    <property type="entry name" value="NELFE"/>
</dbReference>
<dbReference type="InterPro" id="IPR034637">
    <property type="entry name" value="NELFE_RRM"/>
</dbReference>
<dbReference type="InterPro" id="IPR012677">
    <property type="entry name" value="Nucleotide-bd_a/b_plait_sf"/>
</dbReference>
<dbReference type="InterPro" id="IPR035979">
    <property type="entry name" value="RBD_domain_sf"/>
</dbReference>
<dbReference type="InterPro" id="IPR000504">
    <property type="entry name" value="RRM_dom"/>
</dbReference>
<dbReference type="PANTHER" id="PTHR17250">
    <property type="entry name" value="NEGATIVE ELONGATION FACTOR E"/>
    <property type="match status" value="1"/>
</dbReference>
<dbReference type="PANTHER" id="PTHR17250:SF0">
    <property type="entry name" value="NEGATIVE ELONGATION FACTOR E"/>
    <property type="match status" value="1"/>
</dbReference>
<dbReference type="Pfam" id="PF00076">
    <property type="entry name" value="RRM_1"/>
    <property type="match status" value="1"/>
</dbReference>
<dbReference type="SMART" id="SM00360">
    <property type="entry name" value="RRM"/>
    <property type="match status" value="1"/>
</dbReference>
<dbReference type="SUPFAM" id="SSF54928">
    <property type="entry name" value="RNA-binding domain, RBD"/>
    <property type="match status" value="1"/>
</dbReference>
<dbReference type="PROSITE" id="PS50102">
    <property type="entry name" value="RRM"/>
    <property type="match status" value="1"/>
</dbReference>
<accession>P19426</accession>
<accession>P97485</accession>
<accession>P97486</accession>
<accession>Q9CZN3</accession>
<organism>
    <name type="scientific">Mus musculus</name>
    <name type="common">Mouse</name>
    <dbReference type="NCBI Taxonomy" id="10090"/>
    <lineage>
        <taxon>Eukaryota</taxon>
        <taxon>Metazoa</taxon>
        <taxon>Chordata</taxon>
        <taxon>Craniata</taxon>
        <taxon>Vertebrata</taxon>
        <taxon>Euteleostomi</taxon>
        <taxon>Mammalia</taxon>
        <taxon>Eutheria</taxon>
        <taxon>Euarchontoglires</taxon>
        <taxon>Glires</taxon>
        <taxon>Rodentia</taxon>
        <taxon>Myomorpha</taxon>
        <taxon>Muroidea</taxon>
        <taxon>Muridae</taxon>
        <taxon>Murinae</taxon>
        <taxon>Mus</taxon>
        <taxon>Mus</taxon>
    </lineage>
</organism>
<comment type="function">
    <text evidence="1 6">Essential component of the NELF complex, a complex that negatively regulates the elongation of transcription by RNA polymerase II (PubMed:31399344). The NELF complex, which acts via an association with the DSIF complex and causes transcriptional pausing, is counteracted by the P-TEFb kinase complex (PubMed:31399344). Provides the strongest RNA binding activity of the NELF complex and may initially recruit the NELF complex to RNA (By similarity).</text>
</comment>
<comment type="subunit">
    <text evidence="1 5">The NELF complex is composed of NELFA, NELFB, NELFCD and NELFE (By similarity). Interacts with NELFB (PubMed:26010750).</text>
</comment>
<comment type="interaction">
    <interactant intactId="EBI-6142845">
        <id>P19426</id>
    </interactant>
    <interactant intactId="EBI-492813">
        <id>P11499</id>
        <label>Hsp90ab1</label>
    </interactant>
    <organismsDiffer>false</organismsDiffer>
    <experiments>2</experiments>
</comment>
<comment type="subcellular location">
    <subcellularLocation>
        <location evidence="6">Nucleus</location>
    </subcellularLocation>
    <subcellularLocation>
        <location evidence="6">Chromosome</location>
    </subcellularLocation>
    <text evidence="6">Localizes to chromatin (PubMed:31399344). Phosphorylation by the P-TEFb complex promotes its release from chromatin (PubMed:31399344).</text>
</comment>
<comment type="alternative products">
    <event type="alternative splicing"/>
    <isoform>
        <id>P19426-1</id>
        <name>1</name>
        <sequence type="displayed"/>
    </isoform>
    <isoform>
        <id>P19426-2</id>
        <name>2</name>
        <sequence type="described" ref="VSP_008960"/>
    </isoform>
</comment>
<comment type="domain">
    <text evidence="1">The RRM domain interacts with RNA, and is essential for NELF complex function. It is however not required for the NELF complex formation (By similarity).</text>
</comment>
<comment type="PTM">
    <text evidence="6">Phosphorylated by the P-TEFb complex at sites next to its RNA recognition motif, promoting its release from chromatin.</text>
</comment>
<comment type="PTM">
    <text evidence="1">Sumoylated.</text>
</comment>
<comment type="PTM">
    <text evidence="1">Poly-ADP-ribosylated by PARP1, thereby preventing RNA-binding and relieving transcription pausing.</text>
</comment>
<comment type="polymorphism">
    <text evidence="7">The length of the RD repeats is variable.</text>
</comment>
<comment type="similarity">
    <text evidence="10">Belongs to the RRM NELF-E family.</text>
</comment>
<feature type="chain" id="PRO_0000081803" description="Negative elongation factor E">
    <location>
        <begin position="1"/>
        <end position="375"/>
    </location>
</feature>
<feature type="repeat" description="1">
    <location>
        <begin position="184"/>
        <end position="185"/>
    </location>
</feature>
<feature type="repeat" description="2">
    <location>
        <begin position="186"/>
        <end position="187"/>
    </location>
</feature>
<feature type="repeat" description="3">
    <location>
        <begin position="188"/>
        <end position="189"/>
    </location>
</feature>
<feature type="repeat" description="4">
    <location>
        <begin position="190"/>
        <end position="191"/>
    </location>
</feature>
<feature type="repeat" description="5; approximate">
    <location>
        <begin position="192"/>
        <end position="193"/>
    </location>
</feature>
<feature type="repeat" description="6">
    <location>
        <begin position="194"/>
        <end position="195"/>
    </location>
</feature>
<feature type="repeat" description="7">
    <location>
        <begin position="196"/>
        <end position="197"/>
    </location>
</feature>
<feature type="repeat" description="8">
    <location>
        <begin position="198"/>
        <end position="199"/>
    </location>
</feature>
<feature type="repeat" description="9">
    <location>
        <begin position="200"/>
        <end position="201"/>
    </location>
</feature>
<feature type="repeat" description="10; approximate">
    <location>
        <begin position="202"/>
        <end position="203"/>
    </location>
</feature>
<feature type="repeat" description="11">
    <location>
        <begin position="204"/>
        <end position="205"/>
    </location>
</feature>
<feature type="repeat" description="12">
    <location>
        <begin position="206"/>
        <end position="207"/>
    </location>
</feature>
<feature type="repeat" description="13">
    <location>
        <begin position="208"/>
        <end position="209"/>
    </location>
</feature>
<feature type="repeat" description="14">
    <location>
        <begin position="210"/>
        <end position="211"/>
    </location>
</feature>
<feature type="repeat" description="15">
    <location>
        <begin position="212"/>
        <end position="213"/>
    </location>
</feature>
<feature type="repeat" description="16">
    <location>
        <begin position="214"/>
        <end position="215"/>
    </location>
</feature>
<feature type="repeat" description="17">
    <location>
        <begin position="216"/>
        <end position="217"/>
    </location>
</feature>
<feature type="repeat" description="18; approximate">
    <location>
        <begin position="218"/>
        <end position="219"/>
    </location>
</feature>
<feature type="repeat" description="19; approximate">
    <location>
        <begin position="220"/>
        <end position="221"/>
    </location>
</feature>
<feature type="repeat" description="20">
    <location>
        <begin position="222"/>
        <end position="223"/>
    </location>
</feature>
<feature type="repeat" description="21">
    <location>
        <begin position="224"/>
        <end position="225"/>
    </location>
</feature>
<feature type="repeat" description="22">
    <location>
        <begin position="226"/>
        <end position="227"/>
    </location>
</feature>
<feature type="repeat" description="23">
    <location>
        <begin position="228"/>
        <end position="229"/>
    </location>
</feature>
<feature type="repeat" description="24; approximate">
    <location>
        <begin position="230"/>
        <end position="231"/>
    </location>
</feature>
<feature type="repeat" description="25">
    <location>
        <begin position="232"/>
        <end position="233"/>
    </location>
</feature>
<feature type="repeat" description="26">
    <location>
        <begin position="234"/>
        <end position="235"/>
    </location>
</feature>
<feature type="repeat" description="27">
    <location>
        <begin position="236"/>
        <end position="237"/>
    </location>
</feature>
<feature type="repeat" description="28">
    <location>
        <begin position="238"/>
        <end position="239"/>
    </location>
</feature>
<feature type="repeat" description="29">
    <location>
        <begin position="240"/>
        <end position="241"/>
    </location>
</feature>
<feature type="repeat" description="30">
    <location>
        <begin position="242"/>
        <end position="243"/>
    </location>
</feature>
<feature type="repeat" description="31">
    <location>
        <begin position="244"/>
        <end position="245"/>
    </location>
</feature>
<feature type="repeat" description="32">
    <location>
        <begin position="246"/>
        <end position="247"/>
    </location>
</feature>
<feature type="domain" description="RRM" evidence="3">
    <location>
        <begin position="266"/>
        <end position="336"/>
    </location>
</feature>
<feature type="region of interest" description="Disordered" evidence="4">
    <location>
        <begin position="30"/>
        <end position="58"/>
    </location>
</feature>
<feature type="region of interest" description="Disordered" evidence="4">
    <location>
        <begin position="79"/>
        <end position="262"/>
    </location>
</feature>
<feature type="region of interest" description="32 X 2 AA approximate tandem repeats of R-[DSE]">
    <location>
        <begin position="184"/>
        <end position="247"/>
    </location>
</feature>
<feature type="coiled-coil region" evidence="2">
    <location>
        <begin position="7"/>
        <end position="36"/>
    </location>
</feature>
<feature type="compositionally biased region" description="Basic and acidic residues" evidence="4">
    <location>
        <begin position="90"/>
        <end position="101"/>
    </location>
</feature>
<feature type="compositionally biased region" description="Low complexity" evidence="4">
    <location>
        <begin position="155"/>
        <end position="167"/>
    </location>
</feature>
<feature type="compositionally biased region" description="Basic and acidic residues" evidence="4">
    <location>
        <begin position="186"/>
        <end position="260"/>
    </location>
</feature>
<feature type="modified residue" description="Phosphoserine" evidence="1">
    <location>
        <position position="51"/>
    </location>
</feature>
<feature type="modified residue" description="Phosphoserine" evidence="1">
    <location>
        <position position="113"/>
    </location>
</feature>
<feature type="modified residue" description="Phosphoserine" evidence="11 12">
    <location>
        <position position="115"/>
    </location>
</feature>
<feature type="modified residue" description="PolyADP-ribosyl glutamic acid" evidence="1">
    <location>
        <position position="122"/>
    </location>
</feature>
<feature type="modified residue" description="Phosphoserine" evidence="12">
    <location>
        <position position="131"/>
    </location>
</feature>
<feature type="modified residue" description="Phosphoserine" evidence="1">
    <location>
        <position position="139"/>
    </location>
</feature>
<feature type="modified residue" description="PolyADP-ribosyl glutamic acid" evidence="1">
    <location>
        <position position="151"/>
    </location>
</feature>
<feature type="modified residue" description="PolyADP-ribosyl glutamic acid" evidence="1">
    <location>
        <position position="172"/>
    </location>
</feature>
<feature type="modified residue" description="Phosphoserine" evidence="1">
    <location>
        <position position="179"/>
    </location>
</feature>
<feature type="modified residue" description="Phosphoserine" evidence="1">
    <location>
        <position position="181"/>
    </location>
</feature>
<feature type="modified residue" description="Phosphoserine" evidence="1">
    <location>
        <position position="185"/>
    </location>
</feature>
<feature type="modified residue" description="Phosphoserine" evidence="1">
    <location>
        <position position="187"/>
    </location>
</feature>
<feature type="modified residue" description="Phosphoserine" evidence="1">
    <location>
        <position position="191"/>
    </location>
</feature>
<feature type="modified residue" description="Phosphoserine" evidence="1">
    <location>
        <position position="253"/>
    </location>
</feature>
<feature type="modified residue" description="Phosphoserine" evidence="1">
    <location>
        <position position="255"/>
    </location>
</feature>
<feature type="modified residue" description="Phosphothreonine" evidence="1">
    <location>
        <position position="276"/>
    </location>
</feature>
<feature type="modified residue" description="Phosphothreonine" evidence="1">
    <location>
        <position position="278"/>
    </location>
</feature>
<feature type="modified residue" description="Phosphoserine" evidence="1">
    <location>
        <position position="285"/>
    </location>
</feature>
<feature type="modified residue" description="Phosphoserine" evidence="12">
    <location>
        <position position="357"/>
    </location>
</feature>
<feature type="cross-link" description="Glycyl lysine isopeptide (Lys-Gly) (interchain with G-Cter in SUMO1); alternate" evidence="1">
    <location>
        <position position="78"/>
    </location>
</feature>
<feature type="cross-link" description="Glycyl lysine isopeptide (Lys-Gly) (interchain with G-Cter in SUMO2); alternate" evidence="1">
    <location>
        <position position="78"/>
    </location>
</feature>
<feature type="cross-link" description="Glycyl lysine isopeptide (Lys-Gly) (interchain with G-Cter in SUMO2)" evidence="1">
    <location>
        <position position="82"/>
    </location>
</feature>
<feature type="splice variant" id="VSP_008960" description="In isoform 2." evidence="8 9">
    <location>
        <begin position="224"/>
        <end position="231"/>
    </location>
</feature>
<feature type="sequence variant" description="In strain: LP.RIII/Sn." evidence="7">
    <location>
        <begin position="228"/>
        <end position="229"/>
    </location>
</feature>
<feature type="sequence variant" description="In strain: 129/Sv." evidence="7">
    <location>
        <begin position="229"/>
        <end position="236"/>
    </location>
</feature>
<feature type="sequence conflict" description="In Ref. 1; AAA39680." evidence="10" ref="1">
    <original>K</original>
    <variation>E</variation>
    <location>
        <position position="18"/>
    </location>
</feature>
<gene>
    <name type="primary">Nelfe</name>
    <name type="synonym">D17h6s45</name>
    <name type="synonym">Rd</name>
    <name type="synonym">Rdbp</name>
</gene>